<organismHost>
    <name type="scientific">Aves</name>
    <dbReference type="NCBI Taxonomy" id="8782"/>
</organismHost>
<organismHost>
    <name type="scientific">Homo sapiens</name>
    <name type="common">Human</name>
    <dbReference type="NCBI Taxonomy" id="9606"/>
</organismHost>
<organismHost>
    <name type="scientific">Sus scrofa</name>
    <name type="common">Pig</name>
    <dbReference type="NCBI Taxonomy" id="9823"/>
</organismHost>
<comment type="function">
    <text evidence="2">Plays an essential role in viral RNA transcription and replication by forming the heterotrimeric polymerase complex together with PB1 and PB2 subunits. The complex transcribes viral mRNAs by using a unique mechanism called cap-snatching. It consists in the hijacking and cleavage of host capped pre-mRNAs. These short capped RNAs are then used as primers for viral mRNAs. The PB2 subunit is responsible for the binding of the 5' cap of cellular pre-mRNAs which are subsequently cleaved after 10-13 nucleotides by the PA subunit that carries the endonuclease activity.</text>
</comment>
<comment type="cofactor">
    <cofactor evidence="2">
        <name>Mn(2+)</name>
        <dbReference type="ChEBI" id="CHEBI:29035"/>
    </cofactor>
    <text evidence="2">Binds 2 manganese ions per subunit.</text>
</comment>
<comment type="subunit">
    <text evidence="1 2">Influenza RNA polymerase is composed of three subunits: PB1, PB2 and PA. Interacts (via C-terminus) with PB1 (via N-terminus).</text>
</comment>
<comment type="subcellular location">
    <subcellularLocation>
        <location evidence="2">Host cytoplasm</location>
    </subcellularLocation>
    <subcellularLocation>
        <location evidence="2">Host nucleus</location>
    </subcellularLocation>
    <text evidence="1 2">PB1 and PA are transported in the host nucleus as a complex.</text>
</comment>
<comment type="alternative products">
    <event type="ribosomal frameshifting"/>
    <isoform>
        <id>A4GCI2-1</id>
        <name>PA</name>
        <sequence type="displayed"/>
    </isoform>
    <isoform>
        <id>P0CK78-1</id>
        <name>PA-X</name>
        <sequence type="external"/>
    </isoform>
</comment>
<comment type="PTM">
    <text evidence="1 2">Phosphorylated on serines and threonines by host kinases, including human casein kinase II.</text>
</comment>
<comment type="similarity">
    <text evidence="2">Belongs to the influenza viruses PA family.</text>
</comment>
<proteinExistence type="inferred from homology"/>
<keyword id="KW-1157">Cap snatching</keyword>
<keyword id="KW-0255">Endonuclease</keyword>
<keyword id="KW-1262">Eukaryotic host gene expression shutoff by virus</keyword>
<keyword id="KW-1191">Eukaryotic host transcription shutoff by virus</keyword>
<keyword id="KW-1035">Host cytoplasm</keyword>
<keyword id="KW-1190">Host gene expression shutoff by virus</keyword>
<keyword id="KW-1048">Host nucleus</keyword>
<keyword id="KW-0945">Host-virus interaction</keyword>
<keyword id="KW-0378">Hydrolase</keyword>
<keyword id="KW-1104">Inhibition of host RNA polymerase II by virus</keyword>
<keyword id="KW-0464">Manganese</keyword>
<keyword id="KW-0479">Metal-binding</keyword>
<keyword id="KW-0540">Nuclease</keyword>
<keyword id="KW-0597">Phosphoprotein</keyword>
<keyword id="KW-0688">Ribosomal frameshifting</keyword>
<dbReference type="EC" id="3.1.-.-" evidence="2"/>
<dbReference type="EMBL" id="CY020442">
    <property type="protein sequence ID" value="ABO38347.1"/>
    <property type="molecule type" value="Viral_cRNA"/>
</dbReference>
<dbReference type="SMR" id="A4GCI2"/>
<dbReference type="MEROPS" id="S62.001"/>
<dbReference type="Proteomes" id="UP000008582">
    <property type="component" value="Genome"/>
</dbReference>
<dbReference type="GO" id="GO:0030430">
    <property type="term" value="C:host cell cytoplasm"/>
    <property type="evidence" value="ECO:0007669"/>
    <property type="project" value="UniProtKB-SubCell"/>
</dbReference>
<dbReference type="GO" id="GO:0042025">
    <property type="term" value="C:host cell nucleus"/>
    <property type="evidence" value="ECO:0007669"/>
    <property type="project" value="UniProtKB-SubCell"/>
</dbReference>
<dbReference type="GO" id="GO:0004519">
    <property type="term" value="F:endonuclease activity"/>
    <property type="evidence" value="ECO:0007669"/>
    <property type="project" value="UniProtKB-KW"/>
</dbReference>
<dbReference type="GO" id="GO:0046872">
    <property type="term" value="F:metal ion binding"/>
    <property type="evidence" value="ECO:0007669"/>
    <property type="project" value="UniProtKB-KW"/>
</dbReference>
<dbReference type="GO" id="GO:0003723">
    <property type="term" value="F:RNA binding"/>
    <property type="evidence" value="ECO:0007669"/>
    <property type="project" value="UniProtKB-UniRule"/>
</dbReference>
<dbReference type="GO" id="GO:0075526">
    <property type="term" value="P:cap snatching"/>
    <property type="evidence" value="ECO:0007669"/>
    <property type="project" value="UniProtKB-UniRule"/>
</dbReference>
<dbReference type="GO" id="GO:0006351">
    <property type="term" value="P:DNA-templated transcription"/>
    <property type="evidence" value="ECO:0007669"/>
    <property type="project" value="UniProtKB-UniRule"/>
</dbReference>
<dbReference type="GO" id="GO:0039657">
    <property type="term" value="P:symbiont-mediated suppression of host gene expression"/>
    <property type="evidence" value="ECO:0007669"/>
    <property type="project" value="UniProtKB-KW"/>
</dbReference>
<dbReference type="GO" id="GO:0039523">
    <property type="term" value="P:symbiont-mediated suppression of host mRNA transcription via inhibition of RNA polymerase II activity"/>
    <property type="evidence" value="ECO:0007669"/>
    <property type="project" value="UniProtKB-UniRule"/>
</dbReference>
<dbReference type="GO" id="GO:0039694">
    <property type="term" value="P:viral RNA genome replication"/>
    <property type="evidence" value="ECO:0007669"/>
    <property type="project" value="InterPro"/>
</dbReference>
<dbReference type="GO" id="GO:0075523">
    <property type="term" value="P:viral translational frameshifting"/>
    <property type="evidence" value="ECO:0007669"/>
    <property type="project" value="UniProtKB-KW"/>
</dbReference>
<dbReference type="FunFam" id="3.40.91.90:FF:000001">
    <property type="entry name" value="Polymerase acidic protein"/>
    <property type="match status" value="1"/>
</dbReference>
<dbReference type="Gene3D" id="3.40.91.90">
    <property type="entry name" value="Influenza RNA-dependent RNA polymerase subunit PA, endonuclease domain"/>
    <property type="match status" value="1"/>
</dbReference>
<dbReference type="HAMAP" id="MF_04063">
    <property type="entry name" value="INFV_PA"/>
    <property type="match status" value="1"/>
</dbReference>
<dbReference type="InterPro" id="IPR037534">
    <property type="entry name" value="INFV_PA"/>
</dbReference>
<dbReference type="InterPro" id="IPR001009">
    <property type="entry name" value="PA/PA-X"/>
</dbReference>
<dbReference type="InterPro" id="IPR038372">
    <property type="entry name" value="PA/PA-X_sf"/>
</dbReference>
<dbReference type="Pfam" id="PF00603">
    <property type="entry name" value="Flu_PA"/>
    <property type="match status" value="1"/>
</dbReference>
<gene>
    <name evidence="2" type="primary">PA</name>
</gene>
<organism>
    <name type="scientific">Influenza A virus (strain A/Chile/1/1983 H1N1)</name>
    <dbReference type="NCBI Taxonomy" id="380985"/>
    <lineage>
        <taxon>Viruses</taxon>
        <taxon>Riboviria</taxon>
        <taxon>Orthornavirae</taxon>
        <taxon>Negarnaviricota</taxon>
        <taxon>Polyploviricotina</taxon>
        <taxon>Insthoviricetes</taxon>
        <taxon>Articulavirales</taxon>
        <taxon>Orthomyxoviridae</taxon>
        <taxon>Alphainfluenzavirus</taxon>
        <taxon>Alphainfluenzavirus influenzae</taxon>
        <taxon>Influenza A virus</taxon>
    </lineage>
</organism>
<feature type="chain" id="PRO_0000373007" description="Polymerase acidic protein">
    <location>
        <begin position="1"/>
        <end position="716"/>
    </location>
</feature>
<feature type="short sequence motif" description="Nuclear localization signal 1 (NLS1)" evidence="1 2">
    <location>
        <begin position="124"/>
        <end position="139"/>
    </location>
</feature>
<feature type="short sequence motif" description="Nuclear localization signal 2 (NLS2)" evidence="1 2">
    <location>
        <begin position="184"/>
        <end position="247"/>
    </location>
</feature>
<feature type="binding site" evidence="2">
    <location>
        <position position="41"/>
    </location>
    <ligand>
        <name>Mn(2+)</name>
        <dbReference type="ChEBI" id="CHEBI:29035"/>
        <label>1</label>
    </ligand>
</feature>
<feature type="binding site" evidence="2">
    <location>
        <position position="80"/>
    </location>
    <ligand>
        <name>Mn(2+)</name>
        <dbReference type="ChEBI" id="CHEBI:29035"/>
        <label>2</label>
    </ligand>
</feature>
<feature type="binding site" evidence="2">
    <location>
        <position position="108"/>
    </location>
    <ligand>
        <name>Mn(2+)</name>
        <dbReference type="ChEBI" id="CHEBI:29035"/>
        <label>1</label>
    </ligand>
</feature>
<feature type="binding site" evidence="2">
    <location>
        <position position="108"/>
    </location>
    <ligand>
        <name>Mn(2+)</name>
        <dbReference type="ChEBI" id="CHEBI:29035"/>
        <label>2</label>
    </ligand>
</feature>
<feature type="binding site" evidence="2">
    <location>
        <position position="119"/>
    </location>
    <ligand>
        <name>Mn(2+)</name>
        <dbReference type="ChEBI" id="CHEBI:29035"/>
        <label>1</label>
    </ligand>
</feature>
<feature type="binding site" evidence="2">
    <location>
        <position position="120"/>
    </location>
    <ligand>
        <name>Mn(2+)</name>
        <dbReference type="ChEBI" id="CHEBI:29035"/>
        <label>1</label>
    </ligand>
</feature>
<sequence length="716" mass="82874">MEDFVRQCFNPMIVELAEKAMKEYGEDLKIETNKFAAICTHLEVCFMYSDFHFINEQGESIIVEPEDPNALLKHRFEIIEGRDRTMAWTVVNSICNTTGAEKPKFLPDLYDYKENRFIEIGVTRREVHIYYLEKANKIKSEKTHIHIFSFTGEEMATKADYTLDEESRARIKTRLFTIRQEMASRGLWDSFRQSERGEETIEERFEITGTMRRLADQSLPPNFSCLENFRAYVDGFEPNGYIEGKLSQMSKEVNARIEPFLKTTPRPIRLPDGPPCSQRSKFLLMDALKLSIEDPSHEGEGIPLYDAIKCMRTFFGWKEPYVVKPHEKGINPNYLLSWKQVLAELQDIENEEKIPRTKNMKKTSQLKWALGENMAPEKVDFDDCKDISDLKQYDSDEPELRSLSSWIQNEFNKACELTDSIWIELDEIGEDVAPIEHIASMRRNYFTAEVSHCRATEYIMKGVYINTALLNASCAAMDDFQLIPMISKCRTKEGRRKTNLYGFIIKGRSHLRNDTDVVNFVSMEFSLTDPRLEPHKWEKYCVLEIGDMLLRSAIGQVSRPMFLYVRTNGTSKIKMKWGMEMRRCLLQSLQQIESMIEAESSVKEKDMTKEFFENRSETWPIGESPKGVEEGSIGKVCRTLLAKSVFNSLYASPQLEGFSAESRKLLLIVQALRDNLEPGTFDLGGLYEAIEECLINDPWVLLNASWFNSFLTHALR</sequence>
<reference key="1">
    <citation type="submission" date="2007-03" db="EMBL/GenBank/DDBJ databases">
        <title>The NIAID influenza genome sequencing project.</title>
        <authorList>
            <person name="Ghedin E."/>
            <person name="Spiro D."/>
            <person name="Miller N."/>
            <person name="Zaborsky J."/>
            <person name="Feldblyum T."/>
            <person name="Subbu V."/>
            <person name="Shumway M."/>
            <person name="Sparenborg J."/>
            <person name="Groveman L."/>
            <person name="Halpin R."/>
            <person name="Sitz J."/>
            <person name="Koo H."/>
            <person name="Salzberg S.L."/>
            <person name="Webster R.G."/>
            <person name="Hoffmann E."/>
            <person name="Krauss S."/>
            <person name="Naeve C."/>
            <person name="Bao Y."/>
            <person name="Bolotov P."/>
            <person name="Dernovoy D."/>
            <person name="Kiryutin B."/>
            <person name="Lipman D.J."/>
            <person name="Tatusova T."/>
        </authorList>
    </citation>
    <scope>NUCLEOTIDE SEQUENCE [GENOMIC RNA]</scope>
</reference>
<reference key="2">
    <citation type="submission" date="2007-03" db="EMBL/GenBank/DDBJ databases">
        <authorList>
            <consortium name="The NIAID Influenza Genome Sequencing Consortium"/>
        </authorList>
    </citation>
    <scope>NUCLEOTIDE SEQUENCE [GENOMIC RNA]</scope>
</reference>
<name>PA_I83A1</name>
<protein>
    <recommendedName>
        <fullName evidence="2">Polymerase acidic protein</fullName>
        <ecNumber evidence="2">3.1.-.-</ecNumber>
    </recommendedName>
    <alternativeName>
        <fullName evidence="2">RNA-directed RNA polymerase subunit P2</fullName>
    </alternativeName>
</protein>
<evidence type="ECO:0000250" key="1">
    <source>
        <dbReference type="UniProtKB" id="P03433"/>
    </source>
</evidence>
<evidence type="ECO:0000255" key="2">
    <source>
        <dbReference type="HAMAP-Rule" id="MF_04063"/>
    </source>
</evidence>
<accession>A4GCI2</accession>